<dbReference type="EMBL" id="CP001348">
    <property type="protein sequence ID" value="ACL75189.1"/>
    <property type="molecule type" value="Genomic_DNA"/>
</dbReference>
<dbReference type="RefSeq" id="WP_015924351.1">
    <property type="nucleotide sequence ID" value="NC_011898.1"/>
</dbReference>
<dbReference type="SMR" id="B8I8F6"/>
<dbReference type="STRING" id="394503.Ccel_0811"/>
<dbReference type="KEGG" id="cce:Ccel_0811"/>
<dbReference type="eggNOG" id="COG1219">
    <property type="taxonomic scope" value="Bacteria"/>
</dbReference>
<dbReference type="HOGENOM" id="CLU_014218_8_2_9"/>
<dbReference type="OrthoDB" id="9804062at2"/>
<dbReference type="Proteomes" id="UP000001349">
    <property type="component" value="Chromosome"/>
</dbReference>
<dbReference type="GO" id="GO:0009376">
    <property type="term" value="C:HslUV protease complex"/>
    <property type="evidence" value="ECO:0007669"/>
    <property type="project" value="TreeGrafter"/>
</dbReference>
<dbReference type="GO" id="GO:0005524">
    <property type="term" value="F:ATP binding"/>
    <property type="evidence" value="ECO:0007669"/>
    <property type="project" value="UniProtKB-UniRule"/>
</dbReference>
<dbReference type="GO" id="GO:0016887">
    <property type="term" value="F:ATP hydrolysis activity"/>
    <property type="evidence" value="ECO:0007669"/>
    <property type="project" value="InterPro"/>
</dbReference>
<dbReference type="GO" id="GO:0140662">
    <property type="term" value="F:ATP-dependent protein folding chaperone"/>
    <property type="evidence" value="ECO:0007669"/>
    <property type="project" value="InterPro"/>
</dbReference>
<dbReference type="GO" id="GO:0046983">
    <property type="term" value="F:protein dimerization activity"/>
    <property type="evidence" value="ECO:0007669"/>
    <property type="project" value="InterPro"/>
</dbReference>
<dbReference type="GO" id="GO:0051082">
    <property type="term" value="F:unfolded protein binding"/>
    <property type="evidence" value="ECO:0007669"/>
    <property type="project" value="UniProtKB-UniRule"/>
</dbReference>
<dbReference type="GO" id="GO:0008270">
    <property type="term" value="F:zinc ion binding"/>
    <property type="evidence" value="ECO:0007669"/>
    <property type="project" value="InterPro"/>
</dbReference>
<dbReference type="GO" id="GO:0051301">
    <property type="term" value="P:cell division"/>
    <property type="evidence" value="ECO:0007669"/>
    <property type="project" value="TreeGrafter"/>
</dbReference>
<dbReference type="GO" id="GO:0051603">
    <property type="term" value="P:proteolysis involved in protein catabolic process"/>
    <property type="evidence" value="ECO:0007669"/>
    <property type="project" value="TreeGrafter"/>
</dbReference>
<dbReference type="CDD" id="cd19497">
    <property type="entry name" value="RecA-like_ClpX"/>
    <property type="match status" value="1"/>
</dbReference>
<dbReference type="FunFam" id="1.10.8.60:FF:000002">
    <property type="entry name" value="ATP-dependent Clp protease ATP-binding subunit ClpX"/>
    <property type="match status" value="1"/>
</dbReference>
<dbReference type="FunFam" id="3.40.50.300:FF:000005">
    <property type="entry name" value="ATP-dependent Clp protease ATP-binding subunit ClpX"/>
    <property type="match status" value="1"/>
</dbReference>
<dbReference type="Gene3D" id="1.10.8.60">
    <property type="match status" value="1"/>
</dbReference>
<dbReference type="Gene3D" id="6.20.220.10">
    <property type="entry name" value="ClpX chaperone, C4-type zinc finger domain"/>
    <property type="match status" value="1"/>
</dbReference>
<dbReference type="Gene3D" id="3.40.50.300">
    <property type="entry name" value="P-loop containing nucleotide triphosphate hydrolases"/>
    <property type="match status" value="1"/>
</dbReference>
<dbReference type="HAMAP" id="MF_00175">
    <property type="entry name" value="ClpX"/>
    <property type="match status" value="1"/>
</dbReference>
<dbReference type="InterPro" id="IPR003593">
    <property type="entry name" value="AAA+_ATPase"/>
</dbReference>
<dbReference type="InterPro" id="IPR050052">
    <property type="entry name" value="ATP-dep_Clp_protease_ClpX"/>
</dbReference>
<dbReference type="InterPro" id="IPR003959">
    <property type="entry name" value="ATPase_AAA_core"/>
</dbReference>
<dbReference type="InterPro" id="IPR019489">
    <property type="entry name" value="Clp_ATPase_C"/>
</dbReference>
<dbReference type="InterPro" id="IPR004487">
    <property type="entry name" value="Clp_protease_ATP-bd_su_ClpX"/>
</dbReference>
<dbReference type="InterPro" id="IPR046425">
    <property type="entry name" value="ClpX_bact"/>
</dbReference>
<dbReference type="InterPro" id="IPR027417">
    <property type="entry name" value="P-loop_NTPase"/>
</dbReference>
<dbReference type="InterPro" id="IPR010603">
    <property type="entry name" value="Znf_CppX_C4"/>
</dbReference>
<dbReference type="InterPro" id="IPR038366">
    <property type="entry name" value="Znf_CppX_C4_sf"/>
</dbReference>
<dbReference type="NCBIfam" id="TIGR00382">
    <property type="entry name" value="clpX"/>
    <property type="match status" value="1"/>
</dbReference>
<dbReference type="NCBIfam" id="NF003745">
    <property type="entry name" value="PRK05342.1"/>
    <property type="match status" value="1"/>
</dbReference>
<dbReference type="PANTHER" id="PTHR48102:SF7">
    <property type="entry name" value="ATP-DEPENDENT CLP PROTEASE ATP-BINDING SUBUNIT CLPX-LIKE, MITOCHONDRIAL"/>
    <property type="match status" value="1"/>
</dbReference>
<dbReference type="PANTHER" id="PTHR48102">
    <property type="entry name" value="ATP-DEPENDENT CLP PROTEASE ATP-BINDING SUBUNIT CLPX-LIKE, MITOCHONDRIAL-RELATED"/>
    <property type="match status" value="1"/>
</dbReference>
<dbReference type="Pfam" id="PF07724">
    <property type="entry name" value="AAA_2"/>
    <property type="match status" value="1"/>
</dbReference>
<dbReference type="Pfam" id="PF10431">
    <property type="entry name" value="ClpB_D2-small"/>
    <property type="match status" value="1"/>
</dbReference>
<dbReference type="Pfam" id="PF06689">
    <property type="entry name" value="zf-C4_ClpX"/>
    <property type="match status" value="1"/>
</dbReference>
<dbReference type="SMART" id="SM00382">
    <property type="entry name" value="AAA"/>
    <property type="match status" value="1"/>
</dbReference>
<dbReference type="SMART" id="SM01086">
    <property type="entry name" value="ClpB_D2-small"/>
    <property type="match status" value="1"/>
</dbReference>
<dbReference type="SMART" id="SM00994">
    <property type="entry name" value="zf-C4_ClpX"/>
    <property type="match status" value="1"/>
</dbReference>
<dbReference type="SUPFAM" id="SSF57716">
    <property type="entry name" value="Glucocorticoid receptor-like (DNA-binding domain)"/>
    <property type="match status" value="1"/>
</dbReference>
<dbReference type="SUPFAM" id="SSF52540">
    <property type="entry name" value="P-loop containing nucleoside triphosphate hydrolases"/>
    <property type="match status" value="1"/>
</dbReference>
<dbReference type="PROSITE" id="PS51902">
    <property type="entry name" value="CLPX_ZB"/>
    <property type="match status" value="1"/>
</dbReference>
<sequence>MTRYDEKKQLKCSFCGKSQEQVKRLVAGPGVYICDECIELCSEIIEEEFEDTKIDAEVSEIPKPKEIKEILDQYVVGQDAAKRSLSVAVYNHYKRINSDVKTTDIELQKSNIVMLGPTGSGKTFLAQTLAKILNVPFAIADATSLTEAGYVGEDVENILLRLIQAADYDIEKAEKGIIYIDEIDKIARKSENPSITRDVSGEGVQQALLKILEGTLASVPPQGGRKHPHQEFIQIDTTNILFICGGAFDGIDKIIQNRIGKKSLGFGAKIESSKDKDVGQLLKDILPQDLLKFGLIPEFVGRLPIVVTLQSLDKKALVQILTEPKNALVKQYQKLFEMDDVLLEIQDEALEHIAEKAIERNTGARGLRAILEEAMLGVMYDIPSMTNVEKCIIGKEVIAEHSEPELILNENRKSLKKAGAKRTRVKKESVS</sequence>
<keyword id="KW-0067">ATP-binding</keyword>
<keyword id="KW-0143">Chaperone</keyword>
<keyword id="KW-0479">Metal-binding</keyword>
<keyword id="KW-0547">Nucleotide-binding</keyword>
<keyword id="KW-1185">Reference proteome</keyword>
<keyword id="KW-0862">Zinc</keyword>
<reference key="1">
    <citation type="submission" date="2009-01" db="EMBL/GenBank/DDBJ databases">
        <title>Complete sequence of Clostridium cellulolyticum H10.</title>
        <authorList>
            <consortium name="US DOE Joint Genome Institute"/>
            <person name="Lucas S."/>
            <person name="Copeland A."/>
            <person name="Lapidus A."/>
            <person name="Glavina del Rio T."/>
            <person name="Dalin E."/>
            <person name="Tice H."/>
            <person name="Bruce D."/>
            <person name="Goodwin L."/>
            <person name="Pitluck S."/>
            <person name="Chertkov O."/>
            <person name="Saunders E."/>
            <person name="Brettin T."/>
            <person name="Detter J.C."/>
            <person name="Han C."/>
            <person name="Larimer F."/>
            <person name="Land M."/>
            <person name="Hauser L."/>
            <person name="Kyrpides N."/>
            <person name="Ivanova N."/>
            <person name="Zhou J."/>
            <person name="Richardson P."/>
        </authorList>
    </citation>
    <scope>NUCLEOTIDE SEQUENCE [LARGE SCALE GENOMIC DNA]</scope>
    <source>
        <strain>ATCC 35319 / DSM 5812 / JCM 6584 / H10</strain>
    </source>
</reference>
<comment type="function">
    <text evidence="1">ATP-dependent specificity component of the Clp protease. It directs the protease to specific substrates. Can perform chaperone functions in the absence of ClpP.</text>
</comment>
<comment type="subunit">
    <text evidence="1">Component of the ClpX-ClpP complex. Forms a hexameric ring that, in the presence of ATP, binds to fourteen ClpP subunits assembled into a disk-like structure with a central cavity, resembling the structure of eukaryotic proteasomes.</text>
</comment>
<comment type="similarity">
    <text evidence="1">Belongs to the ClpX chaperone family.</text>
</comment>
<feature type="chain" id="PRO_1000123828" description="ATP-dependent Clp protease ATP-binding subunit ClpX">
    <location>
        <begin position="1"/>
        <end position="431"/>
    </location>
</feature>
<feature type="domain" description="ClpX-type ZB" evidence="2">
    <location>
        <begin position="1"/>
        <end position="53"/>
    </location>
</feature>
<feature type="binding site" evidence="2">
    <location>
        <position position="12"/>
    </location>
    <ligand>
        <name>Zn(2+)</name>
        <dbReference type="ChEBI" id="CHEBI:29105"/>
    </ligand>
</feature>
<feature type="binding site" evidence="2">
    <location>
        <position position="15"/>
    </location>
    <ligand>
        <name>Zn(2+)</name>
        <dbReference type="ChEBI" id="CHEBI:29105"/>
    </ligand>
</feature>
<feature type="binding site" evidence="2">
    <location>
        <position position="34"/>
    </location>
    <ligand>
        <name>Zn(2+)</name>
        <dbReference type="ChEBI" id="CHEBI:29105"/>
    </ligand>
</feature>
<feature type="binding site" evidence="2">
    <location>
        <position position="37"/>
    </location>
    <ligand>
        <name>Zn(2+)</name>
        <dbReference type="ChEBI" id="CHEBI:29105"/>
    </ligand>
</feature>
<feature type="binding site" evidence="1">
    <location>
        <begin position="117"/>
        <end position="124"/>
    </location>
    <ligand>
        <name>ATP</name>
        <dbReference type="ChEBI" id="CHEBI:30616"/>
    </ligand>
</feature>
<accession>B8I8F6</accession>
<evidence type="ECO:0000255" key="1">
    <source>
        <dbReference type="HAMAP-Rule" id="MF_00175"/>
    </source>
</evidence>
<evidence type="ECO:0000255" key="2">
    <source>
        <dbReference type="PROSITE-ProRule" id="PRU01250"/>
    </source>
</evidence>
<proteinExistence type="inferred from homology"/>
<organism>
    <name type="scientific">Ruminiclostridium cellulolyticum (strain ATCC 35319 / DSM 5812 / JCM 6584 / H10)</name>
    <name type="common">Clostridium cellulolyticum</name>
    <dbReference type="NCBI Taxonomy" id="394503"/>
    <lineage>
        <taxon>Bacteria</taxon>
        <taxon>Bacillati</taxon>
        <taxon>Bacillota</taxon>
        <taxon>Clostridia</taxon>
        <taxon>Eubacteriales</taxon>
        <taxon>Oscillospiraceae</taxon>
        <taxon>Ruminiclostridium</taxon>
    </lineage>
</organism>
<name>CLPX_RUMCH</name>
<protein>
    <recommendedName>
        <fullName evidence="1">ATP-dependent Clp protease ATP-binding subunit ClpX</fullName>
    </recommendedName>
</protein>
<gene>
    <name evidence="1" type="primary">clpX</name>
    <name type="ordered locus">Ccel_0811</name>
</gene>